<reference key="1">
    <citation type="journal article" date="2006" name="Science">
        <title>Genomic islands and the ecology and evolution of Prochlorococcus.</title>
        <authorList>
            <person name="Coleman M.L."/>
            <person name="Sullivan M.B."/>
            <person name="Martiny A.C."/>
            <person name="Steglich C."/>
            <person name="Barry K."/>
            <person name="Delong E.F."/>
            <person name="Chisholm S.W."/>
        </authorList>
    </citation>
    <scope>NUCLEOTIDE SEQUENCE [LARGE SCALE GENOMIC DNA]</scope>
    <source>
        <strain>MIT 9312</strain>
    </source>
</reference>
<protein>
    <recommendedName>
        <fullName evidence="1">Acetyl-coenzyme A carboxylase carboxyl transferase subunit alpha</fullName>
        <shortName evidence="1">ACCase subunit alpha</shortName>
        <shortName evidence="1">Acetyl-CoA carboxylase carboxyltransferase subunit alpha</shortName>
        <ecNumber evidence="1">2.1.3.15</ecNumber>
    </recommendedName>
</protein>
<evidence type="ECO:0000255" key="1">
    <source>
        <dbReference type="HAMAP-Rule" id="MF_00823"/>
    </source>
</evidence>
<evidence type="ECO:0000255" key="2">
    <source>
        <dbReference type="PROSITE-ProRule" id="PRU01137"/>
    </source>
</evidence>
<sequence length="335" mass="37117">MAKRYLLDFEKPLVELEKQIEQIKELARDSEVDVSQQLLQLETLATRRREEIFKSLTPAQKIQVARHPQRPSTLDFVQMFCDDWIELHGDRNGGDDMALIGGIGSINNRPVLMLGHQKGRDTKENVVRNFGMAKPGGYRKALRLMQHADRFSLPILTFIDTPGAYAGLTAEEQGQGEAIARNLREMFGLTVPIVATVIGEGGSGGALGIGVADRLLMFEHSVYTVASPEACASILWRDAAKAPEAASALKITGKDLLKLGIIDEVLPEPSGGNNWAPLDAGNTLKEAIEKHLDTLLQMTKDELIEERYKKFRVLGKFIEANNIEEIYSEIPPQSE</sequence>
<gene>
    <name evidence="1" type="primary">accA</name>
    <name type="ordered locus">PMT9312_0534</name>
</gene>
<accession>Q31C00</accession>
<proteinExistence type="inferred from homology"/>
<dbReference type="EC" id="2.1.3.15" evidence="1"/>
<dbReference type="EMBL" id="CP000111">
    <property type="protein sequence ID" value="ABB49595.1"/>
    <property type="molecule type" value="Genomic_DNA"/>
</dbReference>
<dbReference type="RefSeq" id="WP_011376093.1">
    <property type="nucleotide sequence ID" value="NC_007577.1"/>
</dbReference>
<dbReference type="SMR" id="Q31C00"/>
<dbReference type="STRING" id="74546.PMT9312_0534"/>
<dbReference type="KEGG" id="pmi:PMT9312_0534"/>
<dbReference type="eggNOG" id="COG0825">
    <property type="taxonomic scope" value="Bacteria"/>
</dbReference>
<dbReference type="HOGENOM" id="CLU_015486_0_2_3"/>
<dbReference type="OrthoDB" id="9808023at2"/>
<dbReference type="UniPathway" id="UPA00655">
    <property type="reaction ID" value="UER00711"/>
</dbReference>
<dbReference type="Proteomes" id="UP000002715">
    <property type="component" value="Chromosome"/>
</dbReference>
<dbReference type="GO" id="GO:0009317">
    <property type="term" value="C:acetyl-CoA carboxylase complex"/>
    <property type="evidence" value="ECO:0007669"/>
    <property type="project" value="InterPro"/>
</dbReference>
<dbReference type="GO" id="GO:0003989">
    <property type="term" value="F:acetyl-CoA carboxylase activity"/>
    <property type="evidence" value="ECO:0007669"/>
    <property type="project" value="InterPro"/>
</dbReference>
<dbReference type="GO" id="GO:0005524">
    <property type="term" value="F:ATP binding"/>
    <property type="evidence" value="ECO:0007669"/>
    <property type="project" value="UniProtKB-KW"/>
</dbReference>
<dbReference type="GO" id="GO:0016743">
    <property type="term" value="F:carboxyl- or carbamoyltransferase activity"/>
    <property type="evidence" value="ECO:0007669"/>
    <property type="project" value="UniProtKB-UniRule"/>
</dbReference>
<dbReference type="GO" id="GO:0006633">
    <property type="term" value="P:fatty acid biosynthetic process"/>
    <property type="evidence" value="ECO:0007669"/>
    <property type="project" value="UniProtKB-KW"/>
</dbReference>
<dbReference type="GO" id="GO:2001295">
    <property type="term" value="P:malonyl-CoA biosynthetic process"/>
    <property type="evidence" value="ECO:0007669"/>
    <property type="project" value="UniProtKB-UniRule"/>
</dbReference>
<dbReference type="Gene3D" id="3.90.226.10">
    <property type="entry name" value="2-enoyl-CoA Hydratase, Chain A, domain 1"/>
    <property type="match status" value="1"/>
</dbReference>
<dbReference type="HAMAP" id="MF_00823">
    <property type="entry name" value="AcetylCoA_CT_alpha"/>
    <property type="match status" value="1"/>
</dbReference>
<dbReference type="InterPro" id="IPR001095">
    <property type="entry name" value="Acetyl_CoA_COase_a_su"/>
</dbReference>
<dbReference type="InterPro" id="IPR029045">
    <property type="entry name" value="ClpP/crotonase-like_dom_sf"/>
</dbReference>
<dbReference type="InterPro" id="IPR011763">
    <property type="entry name" value="COA_CT_C"/>
</dbReference>
<dbReference type="NCBIfam" id="TIGR00513">
    <property type="entry name" value="accA"/>
    <property type="match status" value="1"/>
</dbReference>
<dbReference type="NCBIfam" id="NF041504">
    <property type="entry name" value="AccA_sub"/>
    <property type="match status" value="1"/>
</dbReference>
<dbReference type="NCBIfam" id="NF004344">
    <property type="entry name" value="PRK05724.1"/>
    <property type="match status" value="1"/>
</dbReference>
<dbReference type="PANTHER" id="PTHR42853">
    <property type="entry name" value="ACETYL-COENZYME A CARBOXYLASE CARBOXYL TRANSFERASE SUBUNIT ALPHA"/>
    <property type="match status" value="1"/>
</dbReference>
<dbReference type="PANTHER" id="PTHR42853:SF3">
    <property type="entry name" value="ACETYL-COENZYME A CARBOXYLASE CARBOXYL TRANSFERASE SUBUNIT ALPHA, CHLOROPLASTIC"/>
    <property type="match status" value="1"/>
</dbReference>
<dbReference type="Pfam" id="PF03255">
    <property type="entry name" value="ACCA"/>
    <property type="match status" value="1"/>
</dbReference>
<dbReference type="PRINTS" id="PR01069">
    <property type="entry name" value="ACCCTRFRASEA"/>
</dbReference>
<dbReference type="SUPFAM" id="SSF52096">
    <property type="entry name" value="ClpP/crotonase"/>
    <property type="match status" value="1"/>
</dbReference>
<dbReference type="PROSITE" id="PS50989">
    <property type="entry name" value="COA_CT_CTER"/>
    <property type="match status" value="1"/>
</dbReference>
<organism>
    <name type="scientific">Prochlorococcus marinus (strain MIT 9312)</name>
    <dbReference type="NCBI Taxonomy" id="74546"/>
    <lineage>
        <taxon>Bacteria</taxon>
        <taxon>Bacillati</taxon>
        <taxon>Cyanobacteriota</taxon>
        <taxon>Cyanophyceae</taxon>
        <taxon>Synechococcales</taxon>
        <taxon>Prochlorococcaceae</taxon>
        <taxon>Prochlorococcus</taxon>
    </lineage>
</organism>
<name>ACCA_PROM9</name>
<comment type="function">
    <text evidence="1">Component of the acetyl coenzyme A carboxylase (ACC) complex. First, biotin carboxylase catalyzes the carboxylation of biotin on its carrier protein (BCCP) and then the CO(2) group is transferred by the carboxyltransferase to acetyl-CoA to form malonyl-CoA.</text>
</comment>
<comment type="catalytic activity">
    <reaction evidence="1">
        <text>N(6)-carboxybiotinyl-L-lysyl-[protein] + acetyl-CoA = N(6)-biotinyl-L-lysyl-[protein] + malonyl-CoA</text>
        <dbReference type="Rhea" id="RHEA:54728"/>
        <dbReference type="Rhea" id="RHEA-COMP:10505"/>
        <dbReference type="Rhea" id="RHEA-COMP:10506"/>
        <dbReference type="ChEBI" id="CHEBI:57288"/>
        <dbReference type="ChEBI" id="CHEBI:57384"/>
        <dbReference type="ChEBI" id="CHEBI:83144"/>
        <dbReference type="ChEBI" id="CHEBI:83145"/>
        <dbReference type="EC" id="2.1.3.15"/>
    </reaction>
</comment>
<comment type="pathway">
    <text evidence="1">Lipid metabolism; malonyl-CoA biosynthesis; malonyl-CoA from acetyl-CoA: step 1/1.</text>
</comment>
<comment type="subunit">
    <text evidence="1">Acetyl-CoA carboxylase is a heterohexamer composed of biotin carboxyl carrier protein (AccB), biotin carboxylase (AccC) and two subunits each of ACCase subunit alpha (AccA) and ACCase subunit beta (AccD).</text>
</comment>
<comment type="subcellular location">
    <subcellularLocation>
        <location evidence="1">Cytoplasm</location>
    </subcellularLocation>
</comment>
<comment type="similarity">
    <text evidence="1">Belongs to the AccA family.</text>
</comment>
<keyword id="KW-0067">ATP-binding</keyword>
<keyword id="KW-0963">Cytoplasm</keyword>
<keyword id="KW-0275">Fatty acid biosynthesis</keyword>
<keyword id="KW-0276">Fatty acid metabolism</keyword>
<keyword id="KW-0444">Lipid biosynthesis</keyword>
<keyword id="KW-0443">Lipid metabolism</keyword>
<keyword id="KW-0547">Nucleotide-binding</keyword>
<keyword id="KW-0808">Transferase</keyword>
<feature type="chain" id="PRO_1000062652" description="Acetyl-coenzyme A carboxylase carboxyl transferase subunit alpha">
    <location>
        <begin position="1"/>
        <end position="335"/>
    </location>
</feature>
<feature type="domain" description="CoA carboxyltransferase C-terminal" evidence="2">
    <location>
        <begin position="40"/>
        <end position="294"/>
    </location>
</feature>